<evidence type="ECO:0000250" key="1"/>
<evidence type="ECO:0000305" key="2"/>
<reference key="1">
    <citation type="journal article" date="2000" name="Nature">
        <title>Genome sequence of the endocellular bacterial symbiont of aphids Buchnera sp. APS.</title>
        <authorList>
            <person name="Shigenobu S."/>
            <person name="Watanabe H."/>
            <person name="Hattori M."/>
            <person name="Sakaki Y."/>
            <person name="Ishikawa H."/>
        </authorList>
    </citation>
    <scope>NUCLEOTIDE SEQUENCE [LARGE SCALE GENOMIC DNA]</scope>
    <source>
        <strain>APS</strain>
    </source>
</reference>
<organism>
    <name type="scientific">Buchnera aphidicola subsp. Acyrthosiphon pisum (strain APS)</name>
    <name type="common">Acyrthosiphon pisum symbiotic bacterium</name>
    <dbReference type="NCBI Taxonomy" id="107806"/>
    <lineage>
        <taxon>Bacteria</taxon>
        <taxon>Pseudomonadati</taxon>
        <taxon>Pseudomonadota</taxon>
        <taxon>Gammaproteobacteria</taxon>
        <taxon>Enterobacterales</taxon>
        <taxon>Erwiniaceae</taxon>
        <taxon>Buchnera</taxon>
    </lineage>
</organism>
<protein>
    <recommendedName>
        <fullName>Basal-body rod modification protein FlgD</fullName>
    </recommendedName>
</protein>
<name>FLGD_BUCAI</name>
<sequence length="236" mass="26188">MSTININSSDINLPNIQPPIINNEAVKKNDNNLPNDINPPDLQKNFLSLLIAQIKNQDPTDPIKNSDLTSQLAQINTASGMQKLNNTVDQFSNQISKNQNIQLSTLIGRHVMVPNKKIIHTKDTKTQFGIELFEKATSVEIKITDDNNKTLYLKQLKETEAGRHNFFWDGQDLNKNSVMSGQYNISVIAKKNNQNIPVNSLSVGVVNSIIMSSGNAIIDLGESGQITPLSIREILK</sequence>
<proteinExistence type="inferred from homology"/>
<feature type="chain" id="PRO_0000180810" description="Basal-body rod modification protein FlgD">
    <location>
        <begin position="1"/>
        <end position="236"/>
    </location>
</feature>
<dbReference type="EMBL" id="BA000003">
    <property type="protein sequence ID" value="BAB13044.1"/>
    <property type="molecule type" value="Genomic_DNA"/>
</dbReference>
<dbReference type="RefSeq" id="NP_240158.1">
    <property type="nucleotide sequence ID" value="NC_002528.1"/>
</dbReference>
<dbReference type="RefSeq" id="WP_009874294.1">
    <property type="nucleotide sequence ID" value="NC_002528.1"/>
</dbReference>
<dbReference type="SMR" id="P57421"/>
<dbReference type="STRING" id="563178.BUAP5A_333"/>
<dbReference type="EnsemblBacteria" id="BAB13044">
    <property type="protein sequence ID" value="BAB13044"/>
    <property type="gene ID" value="BAB13044"/>
</dbReference>
<dbReference type="KEGG" id="buc:BU339"/>
<dbReference type="PATRIC" id="fig|107806.10.peg.351"/>
<dbReference type="eggNOG" id="COG1843">
    <property type="taxonomic scope" value="Bacteria"/>
</dbReference>
<dbReference type="HOGENOM" id="CLU_047535_0_0_6"/>
<dbReference type="Proteomes" id="UP000001806">
    <property type="component" value="Chromosome"/>
</dbReference>
<dbReference type="GO" id="GO:0044781">
    <property type="term" value="P:bacterial-type flagellum organization"/>
    <property type="evidence" value="ECO:0007669"/>
    <property type="project" value="UniProtKB-KW"/>
</dbReference>
<dbReference type="Gene3D" id="2.30.30.910">
    <property type="match status" value="1"/>
</dbReference>
<dbReference type="Gene3D" id="2.60.40.4070">
    <property type="match status" value="1"/>
</dbReference>
<dbReference type="InterPro" id="IPR005648">
    <property type="entry name" value="FlgD"/>
</dbReference>
<dbReference type="InterPro" id="IPR025965">
    <property type="entry name" value="FlgD/Vpr_Ig-like"/>
</dbReference>
<dbReference type="InterPro" id="IPR025963">
    <property type="entry name" value="FLgD_Tudor"/>
</dbReference>
<dbReference type="Pfam" id="PF03963">
    <property type="entry name" value="FlgD"/>
    <property type="match status" value="1"/>
</dbReference>
<dbReference type="Pfam" id="PF13860">
    <property type="entry name" value="FlgD_ig"/>
    <property type="match status" value="1"/>
</dbReference>
<dbReference type="Pfam" id="PF13861">
    <property type="entry name" value="FLgD_tudor"/>
    <property type="match status" value="1"/>
</dbReference>
<gene>
    <name type="primary">flgD</name>
    <name type="ordered locus">BU339</name>
</gene>
<keyword id="KW-1005">Bacterial flagellum biogenesis</keyword>
<keyword id="KW-1185">Reference proteome</keyword>
<accession>P57421</accession>
<comment type="function">
    <text evidence="1">Required for flagellar hook formation. May act as a scaffolding protein (By similarity).</text>
</comment>
<comment type="similarity">
    <text evidence="2">Belongs to the FlgD family.</text>
</comment>